<protein>
    <recommendedName>
        <fullName evidence="1">Cobyric acid synthase</fullName>
    </recommendedName>
</protein>
<feature type="chain" id="PRO_0000332350" description="Cobyric acid synthase">
    <location>
        <begin position="1"/>
        <end position="496"/>
    </location>
</feature>
<feature type="domain" description="GATase cobBQ-type" evidence="1">
    <location>
        <begin position="258"/>
        <end position="427"/>
    </location>
</feature>
<feature type="active site" description="Nucleophile" evidence="1">
    <location>
        <position position="339"/>
    </location>
</feature>
<feature type="active site" evidence="1">
    <location>
        <position position="419"/>
    </location>
</feature>
<keyword id="KW-0169">Cobalamin biosynthesis</keyword>
<keyword id="KW-0315">Glutamine amidotransferase</keyword>
<keyword id="KW-1185">Reference proteome</keyword>
<name>COBQ_MYCS2</name>
<proteinExistence type="inferred from homology"/>
<dbReference type="EMBL" id="CP000480">
    <property type="protein sequence ID" value="ABK70801.1"/>
    <property type="molecule type" value="Genomic_DNA"/>
</dbReference>
<dbReference type="EMBL" id="CP001663">
    <property type="protein sequence ID" value="AFP38994.1"/>
    <property type="molecule type" value="Genomic_DNA"/>
</dbReference>
<dbReference type="RefSeq" id="WP_011728453.1">
    <property type="nucleotide sequence ID" value="NZ_SIJM01000029.1"/>
</dbReference>
<dbReference type="RefSeq" id="YP_886925.1">
    <property type="nucleotide sequence ID" value="NC_008596.1"/>
</dbReference>
<dbReference type="SMR" id="A0QVI7"/>
<dbReference type="STRING" id="246196.MSMEG_2588"/>
<dbReference type="PaxDb" id="246196-MSMEI_2526"/>
<dbReference type="KEGG" id="msb:LJ00_12880"/>
<dbReference type="KEGG" id="msg:MSMEI_2526"/>
<dbReference type="KEGG" id="msm:MSMEG_2588"/>
<dbReference type="PATRIC" id="fig|246196.19.peg.2554"/>
<dbReference type="eggNOG" id="COG1492">
    <property type="taxonomic scope" value="Bacteria"/>
</dbReference>
<dbReference type="OrthoDB" id="9808302at2"/>
<dbReference type="UniPathway" id="UPA00148"/>
<dbReference type="Proteomes" id="UP000000757">
    <property type="component" value="Chromosome"/>
</dbReference>
<dbReference type="Proteomes" id="UP000006158">
    <property type="component" value="Chromosome"/>
</dbReference>
<dbReference type="GO" id="GO:0015420">
    <property type="term" value="F:ABC-type vitamin B12 transporter activity"/>
    <property type="evidence" value="ECO:0007669"/>
    <property type="project" value="UniProtKB-UniRule"/>
</dbReference>
<dbReference type="GO" id="GO:0003824">
    <property type="term" value="F:catalytic activity"/>
    <property type="evidence" value="ECO:0007669"/>
    <property type="project" value="InterPro"/>
</dbReference>
<dbReference type="GO" id="GO:0009236">
    <property type="term" value="P:cobalamin biosynthetic process"/>
    <property type="evidence" value="ECO:0007669"/>
    <property type="project" value="UniProtKB-UniRule"/>
</dbReference>
<dbReference type="CDD" id="cd01750">
    <property type="entry name" value="GATase1_CobQ"/>
    <property type="match status" value="1"/>
</dbReference>
<dbReference type="Gene3D" id="3.40.50.880">
    <property type="match status" value="1"/>
</dbReference>
<dbReference type="Gene3D" id="3.40.50.300">
    <property type="entry name" value="P-loop containing nucleotide triphosphate hydrolases"/>
    <property type="match status" value="1"/>
</dbReference>
<dbReference type="HAMAP" id="MF_00028">
    <property type="entry name" value="CobQ"/>
    <property type="match status" value="1"/>
</dbReference>
<dbReference type="InterPro" id="IPR029062">
    <property type="entry name" value="Class_I_gatase-like"/>
</dbReference>
<dbReference type="InterPro" id="IPR002586">
    <property type="entry name" value="CobQ/CobB/MinD/ParA_Nub-bd_dom"/>
</dbReference>
<dbReference type="InterPro" id="IPR033949">
    <property type="entry name" value="CobQ_GATase1"/>
</dbReference>
<dbReference type="InterPro" id="IPR004459">
    <property type="entry name" value="CobQ_synth"/>
</dbReference>
<dbReference type="InterPro" id="IPR011698">
    <property type="entry name" value="GATase_3"/>
</dbReference>
<dbReference type="InterPro" id="IPR027417">
    <property type="entry name" value="P-loop_NTPase"/>
</dbReference>
<dbReference type="NCBIfam" id="TIGR00313">
    <property type="entry name" value="cobQ"/>
    <property type="match status" value="1"/>
</dbReference>
<dbReference type="NCBIfam" id="NF001989">
    <property type="entry name" value="PRK00784.1"/>
    <property type="match status" value="1"/>
</dbReference>
<dbReference type="PANTHER" id="PTHR21343:SF1">
    <property type="entry name" value="COBYRIC ACID SYNTHASE"/>
    <property type="match status" value="1"/>
</dbReference>
<dbReference type="PANTHER" id="PTHR21343">
    <property type="entry name" value="DETHIOBIOTIN SYNTHETASE"/>
    <property type="match status" value="1"/>
</dbReference>
<dbReference type="Pfam" id="PF01656">
    <property type="entry name" value="CbiA"/>
    <property type="match status" value="1"/>
</dbReference>
<dbReference type="Pfam" id="PF07685">
    <property type="entry name" value="GATase_3"/>
    <property type="match status" value="1"/>
</dbReference>
<dbReference type="SUPFAM" id="SSF52317">
    <property type="entry name" value="Class I glutamine amidotransferase-like"/>
    <property type="match status" value="1"/>
</dbReference>
<dbReference type="SUPFAM" id="SSF52540">
    <property type="entry name" value="P-loop containing nucleoside triphosphate hydrolases"/>
    <property type="match status" value="1"/>
</dbReference>
<dbReference type="PROSITE" id="PS51274">
    <property type="entry name" value="GATASE_COBBQ"/>
    <property type="match status" value="1"/>
</dbReference>
<organism>
    <name type="scientific">Mycolicibacterium smegmatis (strain ATCC 700084 / mc(2)155)</name>
    <name type="common">Mycobacterium smegmatis</name>
    <dbReference type="NCBI Taxonomy" id="246196"/>
    <lineage>
        <taxon>Bacteria</taxon>
        <taxon>Bacillati</taxon>
        <taxon>Actinomycetota</taxon>
        <taxon>Actinomycetes</taxon>
        <taxon>Mycobacteriales</taxon>
        <taxon>Mycobacteriaceae</taxon>
        <taxon>Mycolicibacterium</taxon>
    </lineage>
</organism>
<gene>
    <name evidence="1" type="primary">cobQ</name>
    <name type="ordered locus">MSMEG_2588</name>
    <name type="ordered locus">MSMEI_2526</name>
</gene>
<evidence type="ECO:0000255" key="1">
    <source>
        <dbReference type="HAMAP-Rule" id="MF_00028"/>
    </source>
</evidence>
<sequence length="496" mass="52179">MTGGALLVAGTTSDAGKSMLVGGLCRLLVRKGLSVAPFKAQNMSNNSAVTVEGGEIGRAQAMQARAAGLAPSVRFNPILLKPGGDRTSQLVVRGQVTGSVAAADYINHRDHLAAVVADELSSLREDFDAVICEGAGSPAEINLRATDLANMGLARAAALPVIVVGDIDRGGLLAHLHGTVAVLEPADQALVSGFVVNKFRGDPSLLAPGLRQLAELTGRPTYGVIPFHDEIWLDTEDSVSVRPGGLVGAPEPPRGEQTLTVAAIRLPRISNSTDIEALACEPGVVVRWVTDAADLTGADLVVIPGSKATVTDLRWLRERGLAAGIAAHAAAGRAVLGVCGGFQMLCSRIDDPVESREGRVDGLGLLDADIEFAAQKTLRHWETPLHGYEIHHGQVARSAETDWLGIGLRRGAVYGTHWHGLLDNDALRRDWLTEVAAAAGRDGFVVADDVDVSARRDAQLDLMADLIENHLDVGAILDLLEHGAPHRPTMSTALHV</sequence>
<comment type="function">
    <text evidence="1">Catalyzes amidations at positions B, D, E, and G on adenosylcobyrinic A,C-diamide. NH(2) groups are provided by glutamine, and one molecule of ATP is hydrogenolyzed for each amidation.</text>
</comment>
<comment type="pathway">
    <text evidence="1">Cofactor biosynthesis; adenosylcobalamin biosynthesis.</text>
</comment>
<comment type="similarity">
    <text evidence="1">Belongs to the CobB/CobQ family. CobQ subfamily.</text>
</comment>
<accession>A0QVI7</accession>
<accession>I7G8U3</accession>
<reference key="1">
    <citation type="submission" date="2006-10" db="EMBL/GenBank/DDBJ databases">
        <authorList>
            <person name="Fleischmann R.D."/>
            <person name="Dodson R.J."/>
            <person name="Haft D.H."/>
            <person name="Merkel J.S."/>
            <person name="Nelson W.C."/>
            <person name="Fraser C.M."/>
        </authorList>
    </citation>
    <scope>NUCLEOTIDE SEQUENCE [LARGE SCALE GENOMIC DNA]</scope>
    <source>
        <strain>ATCC 700084 / mc(2)155</strain>
    </source>
</reference>
<reference key="2">
    <citation type="journal article" date="2007" name="Genome Biol.">
        <title>Interrupted coding sequences in Mycobacterium smegmatis: authentic mutations or sequencing errors?</title>
        <authorList>
            <person name="Deshayes C."/>
            <person name="Perrodou E."/>
            <person name="Gallien S."/>
            <person name="Euphrasie D."/>
            <person name="Schaeffer C."/>
            <person name="Van-Dorsselaer A."/>
            <person name="Poch O."/>
            <person name="Lecompte O."/>
            <person name="Reyrat J.-M."/>
        </authorList>
    </citation>
    <scope>NUCLEOTIDE SEQUENCE [LARGE SCALE GENOMIC DNA]</scope>
    <source>
        <strain>ATCC 700084 / mc(2)155</strain>
    </source>
</reference>
<reference key="3">
    <citation type="journal article" date="2009" name="Genome Res.">
        <title>Ortho-proteogenomics: multiple proteomes investigation through orthology and a new MS-based protocol.</title>
        <authorList>
            <person name="Gallien S."/>
            <person name="Perrodou E."/>
            <person name="Carapito C."/>
            <person name="Deshayes C."/>
            <person name="Reyrat J.-M."/>
            <person name="Van Dorsselaer A."/>
            <person name="Poch O."/>
            <person name="Schaeffer C."/>
            <person name="Lecompte O."/>
        </authorList>
    </citation>
    <scope>NUCLEOTIDE SEQUENCE [LARGE SCALE GENOMIC DNA]</scope>
    <source>
        <strain>ATCC 700084 / mc(2)155</strain>
    </source>
</reference>